<organism>
    <name type="scientific">Xylella fastidiosa (strain Temecula1 / ATCC 700964)</name>
    <dbReference type="NCBI Taxonomy" id="183190"/>
    <lineage>
        <taxon>Bacteria</taxon>
        <taxon>Pseudomonadati</taxon>
        <taxon>Pseudomonadota</taxon>
        <taxon>Gammaproteobacteria</taxon>
        <taxon>Lysobacterales</taxon>
        <taxon>Lysobacteraceae</taxon>
        <taxon>Xylella</taxon>
    </lineage>
</organism>
<name>Y1894_XYLFT</name>
<protein>
    <recommendedName>
        <fullName>Probable membrane transporter protein PD_1894</fullName>
    </recommendedName>
</protein>
<sequence length="261" mass="27077">MTIQSLIVTIGSGGLVGFALGLLGGGGSILATPLLLYVVGVTNPHIAIGTSAVAVSVNAYANLIAHAWKGHVWWRSAVIFALVGTLGAFLGSSIGMLIDGQRLLLLFGLLMAMVGLLMLRGRATAPRAEHHQTVLRMCMKTSSVAILTGAASGFFGIGGGFLIVPALIFATRMPTINAIGSSLLAVGSFGLITTLNYARHDLVNWTIAMEFIVGGITGGGLGTLLATRLSASKHLLNRVFGLIVIAVAIYVIWRSWASLVA</sequence>
<accession>Q87AD2</accession>
<keyword id="KW-1003">Cell membrane</keyword>
<keyword id="KW-0472">Membrane</keyword>
<keyword id="KW-1185">Reference proteome</keyword>
<keyword id="KW-0812">Transmembrane</keyword>
<keyword id="KW-1133">Transmembrane helix</keyword>
<keyword id="KW-0813">Transport</keyword>
<feature type="chain" id="PRO_0000305342" description="Probable membrane transporter protein PD_1894">
    <location>
        <begin position="1"/>
        <end position="261"/>
    </location>
</feature>
<feature type="transmembrane region" description="Helical" evidence="2">
    <location>
        <begin position="6"/>
        <end position="26"/>
    </location>
</feature>
<feature type="transmembrane region" description="Helical" evidence="2">
    <location>
        <begin position="45"/>
        <end position="64"/>
    </location>
</feature>
<feature type="transmembrane region" description="Helical" evidence="2">
    <location>
        <begin position="78"/>
        <end position="98"/>
    </location>
</feature>
<feature type="transmembrane region" description="Helical" evidence="2">
    <location>
        <begin position="99"/>
        <end position="119"/>
    </location>
</feature>
<feature type="transmembrane region" description="Helical" evidence="2">
    <location>
        <begin position="150"/>
        <end position="170"/>
    </location>
</feature>
<feature type="transmembrane region" description="Helical" evidence="2">
    <location>
        <begin position="175"/>
        <end position="195"/>
    </location>
</feature>
<feature type="transmembrane region" description="Helical" evidence="2">
    <location>
        <begin position="205"/>
        <end position="225"/>
    </location>
</feature>
<feature type="transmembrane region" description="Helical" evidence="2">
    <location>
        <begin position="239"/>
        <end position="259"/>
    </location>
</feature>
<gene>
    <name type="ordered locus">PD_1894</name>
</gene>
<reference key="1">
    <citation type="journal article" date="2003" name="J. Bacteriol.">
        <title>Comparative analyses of the complete genome sequences of Pierce's disease and citrus variegated chlorosis strains of Xylella fastidiosa.</title>
        <authorList>
            <person name="Van Sluys M.A."/>
            <person name="de Oliveira M.C."/>
            <person name="Monteiro-Vitorello C.B."/>
            <person name="Miyaki C.Y."/>
            <person name="Furlan L.R."/>
            <person name="Camargo L.E.A."/>
            <person name="da Silva A.C.R."/>
            <person name="Moon D.H."/>
            <person name="Takita M.A."/>
            <person name="Lemos E.G.M."/>
            <person name="Machado M.A."/>
            <person name="Ferro M.I.T."/>
            <person name="da Silva F.R."/>
            <person name="Goldman M.H.S."/>
            <person name="Goldman G.H."/>
            <person name="Lemos M.V.F."/>
            <person name="El-Dorry H."/>
            <person name="Tsai S.M."/>
            <person name="Carrer H."/>
            <person name="Carraro D.M."/>
            <person name="de Oliveira R.C."/>
            <person name="Nunes L.R."/>
            <person name="Siqueira W.J."/>
            <person name="Coutinho L.L."/>
            <person name="Kimura E.T."/>
            <person name="Ferro E.S."/>
            <person name="Harakava R."/>
            <person name="Kuramae E.E."/>
            <person name="Marino C.L."/>
            <person name="Giglioti E."/>
            <person name="Abreu I.L."/>
            <person name="Alves L.M.C."/>
            <person name="do Amaral A.M."/>
            <person name="Baia G.S."/>
            <person name="Blanco S.R."/>
            <person name="Brito M.S."/>
            <person name="Cannavan F.S."/>
            <person name="Celestino A.V."/>
            <person name="da Cunha A.F."/>
            <person name="Fenille R.C."/>
            <person name="Ferro J.A."/>
            <person name="Formighieri E.F."/>
            <person name="Kishi L.T."/>
            <person name="Leoni S.G."/>
            <person name="Oliveira A.R."/>
            <person name="Rosa V.E. Jr."/>
            <person name="Sassaki F.T."/>
            <person name="Sena J.A.D."/>
            <person name="de Souza A.A."/>
            <person name="Truffi D."/>
            <person name="Tsukumo F."/>
            <person name="Yanai G.M."/>
            <person name="Zaros L.G."/>
            <person name="Civerolo E.L."/>
            <person name="Simpson A.J.G."/>
            <person name="Almeida N.F. Jr."/>
            <person name="Setubal J.C."/>
            <person name="Kitajima J.P."/>
        </authorList>
    </citation>
    <scope>NUCLEOTIDE SEQUENCE [LARGE SCALE GENOMIC DNA]</scope>
    <source>
        <strain>Temecula1 / ATCC 700964</strain>
    </source>
</reference>
<proteinExistence type="inferred from homology"/>
<dbReference type="EMBL" id="AE009442">
    <property type="protein sequence ID" value="AAO29725.1"/>
    <property type="molecule type" value="Genomic_DNA"/>
</dbReference>
<dbReference type="RefSeq" id="WP_004090437.1">
    <property type="nucleotide sequence ID" value="NC_004556.1"/>
</dbReference>
<dbReference type="KEGG" id="xft:PD_1894"/>
<dbReference type="HOGENOM" id="CLU_045498_5_0_6"/>
<dbReference type="Proteomes" id="UP000002516">
    <property type="component" value="Chromosome"/>
</dbReference>
<dbReference type="GO" id="GO:0005886">
    <property type="term" value="C:plasma membrane"/>
    <property type="evidence" value="ECO:0007669"/>
    <property type="project" value="UniProtKB-SubCell"/>
</dbReference>
<dbReference type="InterPro" id="IPR002781">
    <property type="entry name" value="TM_pro_TauE-like"/>
</dbReference>
<dbReference type="InterPro" id="IPR051598">
    <property type="entry name" value="TSUP/Inactive_protease-like"/>
</dbReference>
<dbReference type="PANTHER" id="PTHR43701">
    <property type="entry name" value="MEMBRANE TRANSPORTER PROTEIN MJ0441-RELATED"/>
    <property type="match status" value="1"/>
</dbReference>
<dbReference type="PANTHER" id="PTHR43701:SF2">
    <property type="entry name" value="MEMBRANE TRANSPORTER PROTEIN YJNA-RELATED"/>
    <property type="match status" value="1"/>
</dbReference>
<dbReference type="Pfam" id="PF01925">
    <property type="entry name" value="TauE"/>
    <property type="match status" value="1"/>
</dbReference>
<evidence type="ECO:0000250" key="1"/>
<evidence type="ECO:0000255" key="2"/>
<evidence type="ECO:0000305" key="3"/>
<comment type="subcellular location">
    <subcellularLocation>
        <location evidence="3">Cell membrane</location>
        <topology evidence="3">Multi-pass membrane protein</topology>
    </subcellularLocation>
</comment>
<comment type="induction">
    <text evidence="1">Repressed by BigR.</text>
</comment>
<comment type="miscellaneous">
    <text>Probably part of an operon that comprises bigR, blh, PD_1893 and PD_1892.</text>
</comment>
<comment type="similarity">
    <text evidence="3">Belongs to the 4-toluene sulfonate uptake permease (TSUP) (TC 2.A.102) family.</text>
</comment>